<comment type="function">
    <text evidence="1">Key negative regulator of Shh signaling, which promotes the processing of GLI3 into GLI3R during neural tube development. Recruited by TULP3 and the IFT-A complex to primary cilia and acts as a regulator of the PKA-dependent basal repression machinery in Shh signaling by increasing cAMP levels, leading to promote the PKA-dependent processing of GLI3 into GLI3R and repress the Shh signaling. In presence of SHH, it is removed from primary cilia and is internalized into recycling endosomes, preventing its activity and allowing activation of the Shh signaling. Its ligand is unknown (By similarity).</text>
</comment>
<comment type="subcellular location">
    <subcellularLocation>
        <location evidence="1">Cell projection</location>
        <location evidence="1">Cilium membrane</location>
        <topology evidence="1">Multi-pass membrane protein</topology>
    </subcellularLocation>
    <subcellularLocation>
        <location evidence="1">Cell membrane</location>
        <topology evidence="1">Multi-pass membrane protein</topology>
    </subcellularLocation>
    <text evidence="1">Mainly localizes to primary cilium in a TULP3 and IFT-A complex-dependent manner. In presence of SHH, it is removed from primary cilia and is internalized into recycling endosomes and is apparently not degraded (By similarity).</text>
</comment>
<comment type="similarity">
    <text evidence="3">Belongs to the G-protein coupled receptor 1 family.</text>
</comment>
<reference key="1">
    <citation type="journal article" date="2009" name="Genome Biol.">
        <title>A whole-genome assembly of the domestic cow, Bos taurus.</title>
        <authorList>
            <person name="Zimin A.V."/>
            <person name="Delcher A.L."/>
            <person name="Florea L."/>
            <person name="Kelley D.R."/>
            <person name="Schatz M.C."/>
            <person name="Puiu D."/>
            <person name="Hanrahan F."/>
            <person name="Pertea G."/>
            <person name="Van Tassell C.P."/>
            <person name="Sonstegard T.S."/>
            <person name="Marcais G."/>
            <person name="Roberts M."/>
            <person name="Subramanian P."/>
            <person name="Yorke J.A."/>
            <person name="Salzberg S.L."/>
        </authorList>
    </citation>
    <scope>NUCLEOTIDE SEQUENCE [LARGE SCALE GENOMIC DNA]</scope>
    <source>
        <strain>Hereford</strain>
    </source>
</reference>
<reference key="2">
    <citation type="submission" date="2005-11" db="EMBL/GenBank/DDBJ databases">
        <authorList>
            <consortium name="NIH - Mammalian Gene Collection (MGC) project"/>
        </authorList>
    </citation>
    <scope>NUCLEOTIDE SEQUENCE [LARGE SCALE MRNA]</scope>
    <source>
        <strain>Crossbred X Angus</strain>
        <tissue>Liver</tissue>
    </source>
</reference>
<gene>
    <name type="primary">GPR161</name>
</gene>
<organism>
    <name type="scientific">Bos taurus</name>
    <name type="common">Bovine</name>
    <dbReference type="NCBI Taxonomy" id="9913"/>
    <lineage>
        <taxon>Eukaryota</taxon>
        <taxon>Metazoa</taxon>
        <taxon>Chordata</taxon>
        <taxon>Craniata</taxon>
        <taxon>Vertebrata</taxon>
        <taxon>Euteleostomi</taxon>
        <taxon>Mammalia</taxon>
        <taxon>Eutheria</taxon>
        <taxon>Laurasiatheria</taxon>
        <taxon>Artiodactyla</taxon>
        <taxon>Ruminantia</taxon>
        <taxon>Pecora</taxon>
        <taxon>Bovidae</taxon>
        <taxon>Bovinae</taxon>
        <taxon>Bos</taxon>
    </lineage>
</organism>
<name>GP161_BOVIN</name>
<protein>
    <recommendedName>
        <fullName>G protein-coupled receptor 161</fullName>
    </recommendedName>
</protein>
<proteinExistence type="evidence at transcript level"/>
<accession>Q2YDN1</accession>
<accession>F1MSH4</accession>
<dbReference type="EMBL" id="DAAA02006728">
    <property type="status" value="NOT_ANNOTATED_CDS"/>
    <property type="molecule type" value="Genomic_DNA"/>
</dbReference>
<dbReference type="EMBL" id="BC110145">
    <property type="protein sequence ID" value="AAI10146.1"/>
    <property type="molecule type" value="mRNA"/>
</dbReference>
<dbReference type="RefSeq" id="NP_001070534.1">
    <property type="nucleotide sequence ID" value="NM_001077066.1"/>
</dbReference>
<dbReference type="RefSeq" id="XP_024845532.1">
    <property type="nucleotide sequence ID" value="XM_024989764.2"/>
</dbReference>
<dbReference type="SMR" id="Q2YDN1"/>
<dbReference type="FunCoup" id="Q2YDN1">
    <property type="interactions" value="1240"/>
</dbReference>
<dbReference type="STRING" id="9913.ENSBTAP00000071010"/>
<dbReference type="GlyCosmos" id="Q2YDN1">
    <property type="glycosylation" value="3 sites, No reported glycans"/>
</dbReference>
<dbReference type="GlyGen" id="Q2YDN1">
    <property type="glycosylation" value="3 sites"/>
</dbReference>
<dbReference type="PaxDb" id="9913-ENSBTAP00000000809"/>
<dbReference type="GeneID" id="768006"/>
<dbReference type="KEGG" id="bta:768006"/>
<dbReference type="CTD" id="23432"/>
<dbReference type="VEuPathDB" id="HostDB:ENSBTAG00000000616"/>
<dbReference type="eggNOG" id="KOG3656">
    <property type="taxonomic scope" value="Eukaryota"/>
</dbReference>
<dbReference type="HOGENOM" id="CLU_038027_0_0_1"/>
<dbReference type="InParanoid" id="Q2YDN1"/>
<dbReference type="OMA" id="KRTCVAS"/>
<dbReference type="OrthoDB" id="5980076at2759"/>
<dbReference type="TreeFam" id="TF331895"/>
<dbReference type="Reactome" id="R-BTA-5610787">
    <property type="pathway name" value="Hedgehog 'off' state"/>
</dbReference>
<dbReference type="Reactome" id="R-BTA-5632684">
    <property type="pathway name" value="Hedgehog 'on' state"/>
</dbReference>
<dbReference type="Proteomes" id="UP000009136">
    <property type="component" value="Chromosome 3"/>
</dbReference>
<dbReference type="Bgee" id="ENSBTAG00000000616">
    <property type="expression patterns" value="Expressed in semen and 108 other cell types or tissues"/>
</dbReference>
<dbReference type="GO" id="GO:0060170">
    <property type="term" value="C:ciliary membrane"/>
    <property type="evidence" value="ECO:0007669"/>
    <property type="project" value="UniProtKB-SubCell"/>
</dbReference>
<dbReference type="GO" id="GO:0005929">
    <property type="term" value="C:cilium"/>
    <property type="evidence" value="ECO:0000250"/>
    <property type="project" value="UniProtKB"/>
</dbReference>
<dbReference type="GO" id="GO:0055037">
    <property type="term" value="C:recycling endosome"/>
    <property type="evidence" value="ECO:0000250"/>
    <property type="project" value="UniProtKB"/>
</dbReference>
<dbReference type="GO" id="GO:0004930">
    <property type="term" value="F:G protein-coupled receptor activity"/>
    <property type="evidence" value="ECO:0000250"/>
    <property type="project" value="UniProtKB"/>
</dbReference>
<dbReference type="GO" id="GO:0007189">
    <property type="term" value="P:adenylate cyclase-activating G protein-coupled receptor signaling pathway"/>
    <property type="evidence" value="ECO:0000250"/>
    <property type="project" value="UniProtKB"/>
</dbReference>
<dbReference type="GO" id="GO:0007186">
    <property type="term" value="P:G protein-coupled receptor signaling pathway"/>
    <property type="evidence" value="ECO:0000318"/>
    <property type="project" value="GO_Central"/>
</dbReference>
<dbReference type="GO" id="GO:1901621">
    <property type="term" value="P:negative regulation of smoothened signaling pathway involved in dorsal/ventral neural tube patterning"/>
    <property type="evidence" value="ECO:0000250"/>
    <property type="project" value="UniProtKB"/>
</dbReference>
<dbReference type="CDD" id="cd15214">
    <property type="entry name" value="7tmA_GPR161"/>
    <property type="match status" value="1"/>
</dbReference>
<dbReference type="FunFam" id="1.20.1070.10:FF:000091">
    <property type="entry name" value="G-protein coupled receptor 161"/>
    <property type="match status" value="1"/>
</dbReference>
<dbReference type="Gene3D" id="1.20.1070.10">
    <property type="entry name" value="Rhodopsin 7-helix transmembrane proteins"/>
    <property type="match status" value="1"/>
</dbReference>
<dbReference type="InterPro" id="IPR000276">
    <property type="entry name" value="GPCR_Rhodpsn"/>
</dbReference>
<dbReference type="InterPro" id="IPR017452">
    <property type="entry name" value="GPCR_Rhodpsn_7TM"/>
</dbReference>
<dbReference type="PANTHER" id="PTHR22752">
    <property type="entry name" value="G PROTEIN-COUPLED RECEPTOR"/>
    <property type="match status" value="1"/>
</dbReference>
<dbReference type="PANTHER" id="PTHR22752:SF10">
    <property type="entry name" value="G-PROTEIN COUPLED RECEPTOR 161"/>
    <property type="match status" value="1"/>
</dbReference>
<dbReference type="Pfam" id="PF00001">
    <property type="entry name" value="7tm_1"/>
    <property type="match status" value="1"/>
</dbReference>
<dbReference type="PRINTS" id="PR00237">
    <property type="entry name" value="GPCRRHODOPSN"/>
</dbReference>
<dbReference type="SUPFAM" id="SSF81321">
    <property type="entry name" value="Family A G protein-coupled receptor-like"/>
    <property type="match status" value="1"/>
</dbReference>
<dbReference type="PROSITE" id="PS00237">
    <property type="entry name" value="G_PROTEIN_RECEP_F1_1"/>
    <property type="match status" value="1"/>
</dbReference>
<dbReference type="PROSITE" id="PS50262">
    <property type="entry name" value="G_PROTEIN_RECEP_F1_2"/>
    <property type="match status" value="1"/>
</dbReference>
<evidence type="ECO:0000250" key="1"/>
<evidence type="ECO:0000255" key="2"/>
<evidence type="ECO:0000255" key="3">
    <source>
        <dbReference type="PROSITE-ProRule" id="PRU00521"/>
    </source>
</evidence>
<keyword id="KW-1003">Cell membrane</keyword>
<keyword id="KW-0966">Cell projection</keyword>
<keyword id="KW-0969">Cilium</keyword>
<keyword id="KW-0217">Developmental protein</keyword>
<keyword id="KW-1015">Disulfide bond</keyword>
<keyword id="KW-0297">G-protein coupled receptor</keyword>
<keyword id="KW-0325">Glycoprotein</keyword>
<keyword id="KW-0472">Membrane</keyword>
<keyword id="KW-0675">Receptor</keyword>
<keyword id="KW-1185">Reference proteome</keyword>
<keyword id="KW-0807">Transducer</keyword>
<keyword id="KW-0812">Transmembrane</keyword>
<keyword id="KW-1133">Transmembrane helix</keyword>
<feature type="chain" id="PRO_0000379072" description="G protein-coupled receptor 161">
    <location>
        <begin position="1"/>
        <end position="528"/>
    </location>
</feature>
<feature type="topological domain" description="Extracellular" evidence="2">
    <location>
        <begin position="1"/>
        <end position="30"/>
    </location>
</feature>
<feature type="transmembrane region" description="Helical; Name=1" evidence="2">
    <location>
        <begin position="31"/>
        <end position="51"/>
    </location>
</feature>
<feature type="topological domain" description="Cytoplasmic" evidence="2">
    <location>
        <begin position="52"/>
        <end position="64"/>
    </location>
</feature>
<feature type="transmembrane region" description="Helical; Name=2" evidence="2">
    <location>
        <begin position="65"/>
        <end position="85"/>
    </location>
</feature>
<feature type="topological domain" description="Extracellular" evidence="2">
    <location>
        <begin position="86"/>
        <end position="101"/>
    </location>
</feature>
<feature type="transmembrane region" description="Helical; Name=3" evidence="2">
    <location>
        <begin position="102"/>
        <end position="122"/>
    </location>
</feature>
<feature type="topological domain" description="Cytoplasmic" evidence="2">
    <location>
        <begin position="123"/>
        <end position="143"/>
    </location>
</feature>
<feature type="transmembrane region" description="Helical; Name=4" evidence="2">
    <location>
        <begin position="144"/>
        <end position="164"/>
    </location>
</feature>
<feature type="topological domain" description="Extracellular" evidence="2">
    <location>
        <begin position="165"/>
        <end position="190"/>
    </location>
</feature>
<feature type="transmembrane region" description="Helical; Name=5" evidence="2">
    <location>
        <begin position="191"/>
        <end position="211"/>
    </location>
</feature>
<feature type="topological domain" description="Cytoplasmic" evidence="2">
    <location>
        <begin position="212"/>
        <end position="269"/>
    </location>
</feature>
<feature type="transmembrane region" description="Helical; Name=6" evidence="2">
    <location>
        <begin position="270"/>
        <end position="290"/>
    </location>
</feature>
<feature type="topological domain" description="Extracellular" evidence="2">
    <location>
        <begin position="291"/>
        <end position="306"/>
    </location>
</feature>
<feature type="transmembrane region" description="Helical; Name=7" evidence="2">
    <location>
        <begin position="307"/>
        <end position="327"/>
    </location>
</feature>
<feature type="topological domain" description="Cytoplasmic" evidence="2">
    <location>
        <begin position="328"/>
        <end position="528"/>
    </location>
</feature>
<feature type="glycosylation site" description="N-linked (GlcNAc...) asparagine" evidence="2">
    <location>
        <position position="4"/>
    </location>
</feature>
<feature type="glycosylation site" description="N-linked (GlcNAc...) asparagine" evidence="2">
    <location>
        <position position="15"/>
    </location>
</feature>
<feature type="glycosylation site" description="N-linked (GlcNAc...) asparagine" evidence="2">
    <location>
        <position position="101"/>
    </location>
</feature>
<feature type="disulfide bond" evidence="3">
    <location>
        <begin position="100"/>
        <end position="178"/>
    </location>
</feature>
<sequence length="528" mass="58349">MSLNSSLGHRKELSNLTEGASDQGGSGVTEFVAIVIITVFVCLGNLVIVITLYRKSYLLTLSNKFVFSLTLSNFLLSVLVLPFVVTSSIRREWIFGVVWCNFSALLYLLISSASMLTLGIIAVDRYYAVLYPMAYPMKITGNRAVMVLAYIWLHSLIGCLPPLFGWSSVEFDEFKWMCVAAWHREPGYTAFWQIWCALLPFLVMLVCYGFIFRVARVKARKVHCGAVVTVEVGVQRTGRKNSSTSTSSSGSRKSAFQGVVYSANQCKALVTILVVIGAFMVTWGPYMVVITSEALWGKNCVSPTLETWATWLSFTSAICHPLIYGLWNKTVRKELLGMCFGDRYYREPFVQRQRTSRLFSISNRITDLGLSPHLTALMAGEQPLGNSSSTGDTGFSCSQDSGTDVMLLEDYTSDDNPLHGTCPPKRRSSVTFEDEVEQIKEAAKNPILHVKADVHKSLDSYATSLAKAIEAEAKINLFGEEALPGVLLTARTVPGIGFGSRRGSRTLAGQRLQLQSIEEGDVLATEQR</sequence>